<feature type="chain" id="PRO_1000143163" description="Small ribosomal subunit protein uS15">
    <location>
        <begin position="1"/>
        <end position="89"/>
    </location>
</feature>
<proteinExistence type="inferred from homology"/>
<gene>
    <name evidence="1" type="primary">rpsO</name>
    <name type="ordered locus">SeD_A3639</name>
</gene>
<accession>B5FI10</accession>
<organism>
    <name type="scientific">Salmonella dublin (strain CT_02021853)</name>
    <dbReference type="NCBI Taxonomy" id="439851"/>
    <lineage>
        <taxon>Bacteria</taxon>
        <taxon>Pseudomonadati</taxon>
        <taxon>Pseudomonadota</taxon>
        <taxon>Gammaproteobacteria</taxon>
        <taxon>Enterobacterales</taxon>
        <taxon>Enterobacteriaceae</taxon>
        <taxon>Salmonella</taxon>
    </lineage>
</organism>
<comment type="function">
    <text evidence="1">One of the primary rRNA binding proteins, it binds directly to 16S rRNA where it helps nucleate assembly of the platform of the 30S subunit by binding and bridging several RNA helices of the 16S rRNA.</text>
</comment>
<comment type="function">
    <text evidence="1">Forms an intersubunit bridge (bridge B4) with the 23S rRNA of the 50S subunit in the ribosome.</text>
</comment>
<comment type="subunit">
    <text evidence="1">Part of the 30S ribosomal subunit. Forms a bridge to the 50S subunit in the 70S ribosome, contacting the 23S rRNA.</text>
</comment>
<comment type="similarity">
    <text evidence="1">Belongs to the universal ribosomal protein uS15 family.</text>
</comment>
<evidence type="ECO:0000255" key="1">
    <source>
        <dbReference type="HAMAP-Rule" id="MF_01343"/>
    </source>
</evidence>
<evidence type="ECO:0000305" key="2"/>
<reference key="1">
    <citation type="journal article" date="2011" name="J. Bacteriol.">
        <title>Comparative genomics of 28 Salmonella enterica isolates: evidence for CRISPR-mediated adaptive sublineage evolution.</title>
        <authorList>
            <person name="Fricke W.F."/>
            <person name="Mammel M.K."/>
            <person name="McDermott P.F."/>
            <person name="Tartera C."/>
            <person name="White D.G."/>
            <person name="Leclerc J.E."/>
            <person name="Ravel J."/>
            <person name="Cebula T.A."/>
        </authorList>
    </citation>
    <scope>NUCLEOTIDE SEQUENCE [LARGE SCALE GENOMIC DNA]</scope>
    <source>
        <strain>CT_02021853</strain>
    </source>
</reference>
<sequence length="89" mass="10198">MSLSTEATAKIVSEFGRDANDTGSTDVQVALLTAQINHLQGHFAEHKKDHHSRRGLLRMVSQRRKLLDYLKRKDVARYTALIERLGLRR</sequence>
<name>RS15_SALDC</name>
<keyword id="KW-0687">Ribonucleoprotein</keyword>
<keyword id="KW-0689">Ribosomal protein</keyword>
<keyword id="KW-0694">RNA-binding</keyword>
<keyword id="KW-0699">rRNA-binding</keyword>
<protein>
    <recommendedName>
        <fullName evidence="1">Small ribosomal subunit protein uS15</fullName>
    </recommendedName>
    <alternativeName>
        <fullName evidence="2">30S ribosomal protein S15</fullName>
    </alternativeName>
</protein>
<dbReference type="EMBL" id="CP001144">
    <property type="protein sequence ID" value="ACH76241.1"/>
    <property type="molecule type" value="Genomic_DNA"/>
</dbReference>
<dbReference type="RefSeq" id="WP_000059465.1">
    <property type="nucleotide sequence ID" value="NC_011205.1"/>
</dbReference>
<dbReference type="SMR" id="B5FI10"/>
<dbReference type="GeneID" id="93035884"/>
<dbReference type="KEGG" id="sed:SeD_A3639"/>
<dbReference type="HOGENOM" id="CLU_148518_0_0_6"/>
<dbReference type="Proteomes" id="UP000008322">
    <property type="component" value="Chromosome"/>
</dbReference>
<dbReference type="GO" id="GO:0022627">
    <property type="term" value="C:cytosolic small ribosomal subunit"/>
    <property type="evidence" value="ECO:0007669"/>
    <property type="project" value="TreeGrafter"/>
</dbReference>
<dbReference type="GO" id="GO:0019843">
    <property type="term" value="F:rRNA binding"/>
    <property type="evidence" value="ECO:0007669"/>
    <property type="project" value="UniProtKB-UniRule"/>
</dbReference>
<dbReference type="GO" id="GO:0003735">
    <property type="term" value="F:structural constituent of ribosome"/>
    <property type="evidence" value="ECO:0007669"/>
    <property type="project" value="InterPro"/>
</dbReference>
<dbReference type="GO" id="GO:0006412">
    <property type="term" value="P:translation"/>
    <property type="evidence" value="ECO:0007669"/>
    <property type="project" value="UniProtKB-UniRule"/>
</dbReference>
<dbReference type="CDD" id="cd00353">
    <property type="entry name" value="Ribosomal_S15p_S13e"/>
    <property type="match status" value="1"/>
</dbReference>
<dbReference type="FunFam" id="1.10.287.10:FF:000002">
    <property type="entry name" value="30S ribosomal protein S15"/>
    <property type="match status" value="1"/>
</dbReference>
<dbReference type="Gene3D" id="6.10.250.3130">
    <property type="match status" value="1"/>
</dbReference>
<dbReference type="Gene3D" id="1.10.287.10">
    <property type="entry name" value="S15/NS1, RNA-binding"/>
    <property type="match status" value="1"/>
</dbReference>
<dbReference type="HAMAP" id="MF_01343_B">
    <property type="entry name" value="Ribosomal_uS15_B"/>
    <property type="match status" value="1"/>
</dbReference>
<dbReference type="InterPro" id="IPR000589">
    <property type="entry name" value="Ribosomal_uS15"/>
</dbReference>
<dbReference type="InterPro" id="IPR005290">
    <property type="entry name" value="Ribosomal_uS15_bac-type"/>
</dbReference>
<dbReference type="InterPro" id="IPR009068">
    <property type="entry name" value="uS15_NS1_RNA-bd_sf"/>
</dbReference>
<dbReference type="NCBIfam" id="TIGR00952">
    <property type="entry name" value="S15_bact"/>
    <property type="match status" value="1"/>
</dbReference>
<dbReference type="PANTHER" id="PTHR23321">
    <property type="entry name" value="RIBOSOMAL PROTEIN S15, BACTERIAL AND ORGANELLAR"/>
    <property type="match status" value="1"/>
</dbReference>
<dbReference type="PANTHER" id="PTHR23321:SF26">
    <property type="entry name" value="SMALL RIBOSOMAL SUBUNIT PROTEIN US15M"/>
    <property type="match status" value="1"/>
</dbReference>
<dbReference type="Pfam" id="PF00312">
    <property type="entry name" value="Ribosomal_S15"/>
    <property type="match status" value="1"/>
</dbReference>
<dbReference type="SMART" id="SM01387">
    <property type="entry name" value="Ribosomal_S15"/>
    <property type="match status" value="1"/>
</dbReference>
<dbReference type="SUPFAM" id="SSF47060">
    <property type="entry name" value="S15/NS1 RNA-binding domain"/>
    <property type="match status" value="1"/>
</dbReference>
<dbReference type="PROSITE" id="PS00362">
    <property type="entry name" value="RIBOSOMAL_S15"/>
    <property type="match status" value="1"/>
</dbReference>